<sequence length="858" mass="95588">MAYHPAYTETMSMGGGSSHGGGQQYVPFATSSGSLRVELLHGNLDIWVKEAKHLPNMDGFHNRLGGMLSGLGRKKVEGEKSSKITSDPYVTVSISGAVIGRTFVISNSENPVWMQHFDVPVAHSAAEVHFVVKDSDIIGSQIMGAVGIPTEQLCSGNRIEGLFPILNSSGKPCKQGAVLGLSIQYTPMERMRLYQMGVGSGNECVGVPGTYFPLRKGGRVTLYQDAHVDDGTLPSVHLDGGIQYRHGKCWEDMADAIRQARRLIYITGWSVFHPVRLVRRTNDPTEGTLGELLKVKSQEGVRVLVLVWDDPTSRSLLGFKTQGVMNTSDEETRRFFKHSSVQVLLCPRSGGKGHSFIKKSEVGTIYTHHQKTVIVDAEAAQNRRKIVAFVGGLDLCNGRFDTPKHPLFRTLKTLHKDDFHNPNFVTTADDGPREPWHDLHSKIDGPAAYDVLANFEERWMKASKPRGIGKLKSSSDDSLLRIDRIPDIVGLSEASSANDNDPESWHVQVFRSIDSSSVKGFPKDPKEATGRNLLCGKNILIDMSIHAAYVKAIRSAQHFIYIENQYFLGSSFNWDSNKDLGANNLIPMEIALKIANKIRAREKFAAYIVIPMWPEGAPTSNPIQRILYWQHKTMQMMYQTIYKALVEVGLDSQFEPQDFLNFFCLGTREVPVGTVSVYNSPRKPPQPNANANAAQVQALKSRRFMIYVHSKGMVVDDEFVLIGSANINQRSLEGTRDTEIAMGGYQPHYSWAMKGSRPHGQIFGYRMSLWAEHLGFLEQGFEEPENMECVRRVRQLSELNWRQYAAEEVTEMSGHLLKYPVQVDRTGKVSSLPGCETFPDLGGKIIGSFLALQENLTI</sequence>
<accession>Q9T053</accession>
<accession>O48544</accession>
<evidence type="ECO:0000250" key="1">
    <source>
        <dbReference type="UniProtKB" id="Q38882"/>
    </source>
</evidence>
<evidence type="ECO:0000255" key="2">
    <source>
        <dbReference type="PROSITE-ProRule" id="PRU00041"/>
    </source>
</evidence>
<evidence type="ECO:0000255" key="3">
    <source>
        <dbReference type="PROSITE-ProRule" id="PRU00153"/>
    </source>
</evidence>
<evidence type="ECO:0000269" key="4">
    <source>
    </source>
</evidence>
<evidence type="ECO:0000269" key="5">
    <source>
    </source>
</evidence>
<evidence type="ECO:0000269" key="6">
    <source>
    </source>
</evidence>
<evidence type="ECO:0000269" key="7">
    <source>
    </source>
</evidence>
<evidence type="ECO:0000269" key="8">
    <source>
    </source>
</evidence>
<evidence type="ECO:0000269" key="9">
    <source>
    </source>
</evidence>
<evidence type="ECO:0000269" key="10">
    <source>
    </source>
</evidence>
<evidence type="ECO:0000303" key="11">
    <source>
    </source>
</evidence>
<evidence type="ECO:0000305" key="12"/>
<evidence type="ECO:0000312" key="13">
    <source>
        <dbReference type="Araport" id="AT4G11850"/>
    </source>
</evidence>
<evidence type="ECO:0000312" key="14">
    <source>
        <dbReference type="EMBL" id="CAB44323.1"/>
    </source>
</evidence>
<evidence type="ECO:0007744" key="15">
    <source>
    </source>
</evidence>
<protein>
    <recommendedName>
        <fullName evidence="11">Phospholipase D gamma 1</fullName>
        <shortName evidence="11">AtPLDgamma1</shortName>
        <shortName evidence="11">PLD gamma 1</shortName>
        <ecNumber evidence="5 7 9">3.1.4.4</ecNumber>
    </recommendedName>
    <alternativeName>
        <fullName>Choline phosphatase</fullName>
    </alternativeName>
    <alternativeName>
        <fullName>Lecithinase D</fullName>
    </alternativeName>
    <alternativeName>
        <fullName>Lipophosphodiesterase II</fullName>
    </alternativeName>
</protein>
<name>PLDG1_ARATH</name>
<keyword id="KW-0106">Calcium</keyword>
<keyword id="KW-0963">Cytoplasm</keyword>
<keyword id="KW-0378">Hydrolase</keyword>
<keyword id="KW-0442">Lipid degradation</keyword>
<keyword id="KW-0443">Lipid metabolism</keyword>
<keyword id="KW-0472">Membrane</keyword>
<keyword id="KW-0479">Metal-binding</keyword>
<keyword id="KW-0597">Phosphoprotein</keyword>
<keyword id="KW-1185">Reference proteome</keyword>
<keyword id="KW-0677">Repeat</keyword>
<proteinExistence type="evidence at protein level"/>
<comment type="function">
    <text evidence="5 7 8 10">Hydrolyzes glycerol-phospholipids at the terminal phosphodiesteric bond to generate phosphatidic acids (PA). Plays an important role in various cellular processes, including phytohormone action, vesicular trafficking, secretion, cytoskeletal arrangement, meiosis, tumor promotion, pathogenesis, membrane deterioration and senescence (PubMed:10441386). Can use phosphatidylserine (PS) and phosphatidylethanolamine (PE) as substrates only in the presence of PIP2. Can use phosphatidylcholine (PC), phosphatidylglycerol (PG) or N-acylphosphatidylethanolamine (NAPE) as substrates in the presence of PE and PIP2 (PubMed:17098468, PubMed:9578608). Involved in membrane lipid modulation under aluminum (Al) stress and negatively modulate plant tolerance to Al (PubMed:22163277).</text>
</comment>
<comment type="catalytic activity">
    <reaction evidence="5 7 9">
        <text>a 1,2-diacyl-sn-glycero-3-phosphocholine + H2O = a 1,2-diacyl-sn-glycero-3-phosphate + choline + H(+)</text>
        <dbReference type="Rhea" id="RHEA:14445"/>
        <dbReference type="ChEBI" id="CHEBI:15354"/>
        <dbReference type="ChEBI" id="CHEBI:15377"/>
        <dbReference type="ChEBI" id="CHEBI:15378"/>
        <dbReference type="ChEBI" id="CHEBI:57643"/>
        <dbReference type="ChEBI" id="CHEBI:58608"/>
        <dbReference type="EC" id="3.1.4.4"/>
    </reaction>
</comment>
<comment type="cofactor">
    <cofactor evidence="7 9">
        <name>Ca(2+)</name>
        <dbReference type="ChEBI" id="CHEBI:29108"/>
    </cofactor>
    <text evidence="7 9">Ca(2+). Requires micromolar level (PIP2-dependent).</text>
</comment>
<comment type="activity regulation">
    <text evidence="9">Inhibited by neomycin. Up-regulated by PIP2 binding.</text>
</comment>
<comment type="biophysicochemical properties">
    <phDependence>
        <text evidence="5 7">Optimum pH is 5.5 to 8.5.</text>
    </phDependence>
</comment>
<comment type="subcellular location">
    <subcellularLocation>
        <location evidence="4">Cytoplasm</location>
    </subcellularLocation>
    <subcellularLocation>
        <location evidence="4">Membrane</location>
        <topology evidence="4">Peripheral membrane protein</topology>
    </subcellularLocation>
    <text>Found mainly associated with intracellular membranes but also with mitochondrial membranes, nuclei and clathrin-coated vesicles. Not found in chloroplast.</text>
</comment>
<comment type="tissue specificity">
    <text evidence="4 7">Highly expressed in roots and flowers, moderately in stems, leaves and seedlings and low in siliques. Not detected in seeds.</text>
</comment>
<comment type="induction">
    <text evidence="6 7 8">Activated by wounding, heavy metal, methyl salicylate, osmotic and salt stresses (PubMed:11090221, PubMed:17098468). Up-regulated by aluminum stress (PubMed:22163277).</text>
</comment>
<comment type="domain">
    <text evidence="12">C2 domain is a calcium-binding fold, and the binding promotes the protein association with membranes. In PLD gamma, all the calcium-coordinating acidic amino acids are conserved.</text>
</comment>
<comment type="disruption phenotype">
    <text evidence="8">Increased tolerance to aluminum.</text>
</comment>
<comment type="similarity">
    <text evidence="12">Belongs to the phospholipase D family. C2-PLD subfamily.</text>
</comment>
<comment type="caution">
    <text evidence="12">It is uncertain whether Met-1 or Met-11 is the initiator.</text>
</comment>
<comment type="sequence caution" evidence="12">
    <conflict type="frameshift">
        <sequence resource="EMBL-CDS" id="AAB87672"/>
    </conflict>
</comment>
<organism>
    <name type="scientific">Arabidopsis thaliana</name>
    <name type="common">Mouse-ear cress</name>
    <dbReference type="NCBI Taxonomy" id="3702"/>
    <lineage>
        <taxon>Eukaryota</taxon>
        <taxon>Viridiplantae</taxon>
        <taxon>Streptophyta</taxon>
        <taxon>Embryophyta</taxon>
        <taxon>Tracheophyta</taxon>
        <taxon>Spermatophyta</taxon>
        <taxon>Magnoliopsida</taxon>
        <taxon>eudicotyledons</taxon>
        <taxon>Gunneridae</taxon>
        <taxon>Pentapetalae</taxon>
        <taxon>rosids</taxon>
        <taxon>malvids</taxon>
        <taxon>Brassicales</taxon>
        <taxon>Brassicaceae</taxon>
        <taxon>Camelineae</taxon>
        <taxon>Arabidopsis</taxon>
    </lineage>
</organism>
<gene>
    <name evidence="11" type="primary">PLDGAMMA1</name>
    <name evidence="13" type="ordered locus">At4g11850</name>
    <name evidence="14" type="ORF">T26M18.60</name>
</gene>
<dbReference type="EC" id="3.1.4.4" evidence="5 7 9"/>
<dbReference type="EMBL" id="AF027408">
    <property type="protein sequence ID" value="AAB87672.1"/>
    <property type="status" value="ALT_FRAME"/>
    <property type="molecule type" value="mRNA"/>
</dbReference>
<dbReference type="EMBL" id="AL078606">
    <property type="protein sequence ID" value="CAB44323.1"/>
    <property type="molecule type" value="Genomic_DNA"/>
</dbReference>
<dbReference type="EMBL" id="AL161532">
    <property type="protein sequence ID" value="CAB78228.1"/>
    <property type="molecule type" value="Genomic_DNA"/>
</dbReference>
<dbReference type="EMBL" id="CP002687">
    <property type="protein sequence ID" value="AEE83058.1"/>
    <property type="molecule type" value="Genomic_DNA"/>
</dbReference>
<dbReference type="EMBL" id="AY099569">
    <property type="protein sequence ID" value="AAM20421.1"/>
    <property type="molecule type" value="mRNA"/>
</dbReference>
<dbReference type="EMBL" id="BT002140">
    <property type="protein sequence ID" value="AAN72151.1"/>
    <property type="molecule type" value="mRNA"/>
</dbReference>
<dbReference type="PIR" id="T09344">
    <property type="entry name" value="T09344"/>
</dbReference>
<dbReference type="RefSeq" id="NP_192922.1">
    <property type="nucleotide sequence ID" value="NM_117255.3"/>
</dbReference>
<dbReference type="SMR" id="Q9T053"/>
<dbReference type="BioGRID" id="12089">
    <property type="interactions" value="6"/>
</dbReference>
<dbReference type="FunCoup" id="Q9T053">
    <property type="interactions" value="198"/>
</dbReference>
<dbReference type="IntAct" id="Q9T053">
    <property type="interactions" value="1"/>
</dbReference>
<dbReference type="STRING" id="3702.Q9T053"/>
<dbReference type="iPTMnet" id="Q9T053"/>
<dbReference type="PaxDb" id="3702-AT4G11850.1"/>
<dbReference type="ProteomicsDB" id="235037"/>
<dbReference type="EnsemblPlants" id="AT4G11850.1">
    <property type="protein sequence ID" value="AT4G11850.1"/>
    <property type="gene ID" value="AT4G11850"/>
</dbReference>
<dbReference type="GeneID" id="826791"/>
<dbReference type="Gramene" id="AT4G11850.1">
    <property type="protein sequence ID" value="AT4G11850.1"/>
    <property type="gene ID" value="AT4G11850"/>
</dbReference>
<dbReference type="KEGG" id="ath:AT4G11850"/>
<dbReference type="Araport" id="AT4G11850"/>
<dbReference type="TAIR" id="AT4G11850">
    <property type="gene designation" value="PLDGAMMA1"/>
</dbReference>
<dbReference type="eggNOG" id="KOG1329">
    <property type="taxonomic scope" value="Eukaryota"/>
</dbReference>
<dbReference type="HOGENOM" id="CLU_004684_0_0_1"/>
<dbReference type="InParanoid" id="Q9T053"/>
<dbReference type="OMA" id="KQHERFS"/>
<dbReference type="PhylomeDB" id="Q9T053"/>
<dbReference type="BioCyc" id="ARA:AT4G11850-MONOMER"/>
<dbReference type="BioCyc" id="MetaCyc:AT4G11850-MONOMER"/>
<dbReference type="BRENDA" id="3.1.4.4">
    <property type="organism ID" value="399"/>
</dbReference>
<dbReference type="CD-CODE" id="4299E36E">
    <property type="entry name" value="Nucleolus"/>
</dbReference>
<dbReference type="PRO" id="PR:Q9T053"/>
<dbReference type="Proteomes" id="UP000006548">
    <property type="component" value="Chromosome 4"/>
</dbReference>
<dbReference type="ExpressionAtlas" id="Q9T053">
    <property type="expression patterns" value="baseline and differential"/>
</dbReference>
<dbReference type="GO" id="GO:0005829">
    <property type="term" value="C:cytosol"/>
    <property type="evidence" value="ECO:0007005"/>
    <property type="project" value="TAIR"/>
</dbReference>
<dbReference type="GO" id="GO:0005886">
    <property type="term" value="C:plasma membrane"/>
    <property type="evidence" value="ECO:0000314"/>
    <property type="project" value="TAIR"/>
</dbReference>
<dbReference type="GO" id="GO:0005509">
    <property type="term" value="F:calcium ion binding"/>
    <property type="evidence" value="ECO:0007669"/>
    <property type="project" value="InterPro"/>
</dbReference>
<dbReference type="GO" id="GO:0005546">
    <property type="term" value="F:phosphatidylinositol-4,5-bisphosphate binding"/>
    <property type="evidence" value="ECO:0000314"/>
    <property type="project" value="TAIR"/>
</dbReference>
<dbReference type="GO" id="GO:0004630">
    <property type="term" value="F:phospholipase D activity"/>
    <property type="evidence" value="ECO:0000314"/>
    <property type="project" value="TAIR"/>
</dbReference>
<dbReference type="GO" id="GO:0009793">
    <property type="term" value="P:embryo development ending in seed dormancy"/>
    <property type="evidence" value="ECO:0000315"/>
    <property type="project" value="TAIR"/>
</dbReference>
<dbReference type="GO" id="GO:0045087">
    <property type="term" value="P:innate immune response"/>
    <property type="evidence" value="ECO:0000314"/>
    <property type="project" value="TAIR"/>
</dbReference>
<dbReference type="GO" id="GO:0016042">
    <property type="term" value="P:lipid catabolic process"/>
    <property type="evidence" value="ECO:0007669"/>
    <property type="project" value="UniProtKB-KW"/>
</dbReference>
<dbReference type="GO" id="GO:0006643">
    <property type="term" value="P:membrane lipid metabolic process"/>
    <property type="evidence" value="ECO:0000315"/>
    <property type="project" value="TAIR"/>
</dbReference>
<dbReference type="GO" id="GO:0046470">
    <property type="term" value="P:phosphatidylcholine metabolic process"/>
    <property type="evidence" value="ECO:0007669"/>
    <property type="project" value="InterPro"/>
</dbReference>
<dbReference type="GO" id="GO:0010044">
    <property type="term" value="P:response to aluminum ion"/>
    <property type="evidence" value="ECO:0000315"/>
    <property type="project" value="TAIR"/>
</dbReference>
<dbReference type="GO" id="GO:0006979">
    <property type="term" value="P:response to oxidative stress"/>
    <property type="evidence" value="ECO:0000315"/>
    <property type="project" value="TAIR"/>
</dbReference>
<dbReference type="CDD" id="cd04015">
    <property type="entry name" value="C2_plant_PLD"/>
    <property type="match status" value="1"/>
</dbReference>
<dbReference type="FunFam" id="3.30.870.10:FF:000027">
    <property type="entry name" value="Phospholipase D"/>
    <property type="match status" value="1"/>
</dbReference>
<dbReference type="FunFam" id="2.60.40.150:FF:000193">
    <property type="entry name" value="Phospholipase D delta"/>
    <property type="match status" value="1"/>
</dbReference>
<dbReference type="FunFam" id="3.30.870.10:FF:000025">
    <property type="entry name" value="Phospholipase D delta"/>
    <property type="match status" value="1"/>
</dbReference>
<dbReference type="Gene3D" id="2.60.40.150">
    <property type="entry name" value="C2 domain"/>
    <property type="match status" value="1"/>
</dbReference>
<dbReference type="Gene3D" id="3.30.870.10">
    <property type="entry name" value="Endonuclease Chain A"/>
    <property type="match status" value="2"/>
</dbReference>
<dbReference type="InterPro" id="IPR000008">
    <property type="entry name" value="C2_dom"/>
</dbReference>
<dbReference type="InterPro" id="IPR035892">
    <property type="entry name" value="C2_domain_sf"/>
</dbReference>
<dbReference type="InterPro" id="IPR001736">
    <property type="entry name" value="PLipase_D/transphosphatidylase"/>
</dbReference>
<dbReference type="InterPro" id="IPR024632">
    <property type="entry name" value="PLipase_D_C"/>
</dbReference>
<dbReference type="InterPro" id="IPR015679">
    <property type="entry name" value="PLipase_D_fam"/>
</dbReference>
<dbReference type="InterPro" id="IPR011402">
    <property type="entry name" value="PLipase_D_pln"/>
</dbReference>
<dbReference type="PANTHER" id="PTHR18896">
    <property type="entry name" value="PHOSPHOLIPASE D"/>
    <property type="match status" value="1"/>
</dbReference>
<dbReference type="PANTHER" id="PTHR18896:SF199">
    <property type="entry name" value="PHOSPHOLIPASE D GAMMA 1"/>
    <property type="match status" value="1"/>
</dbReference>
<dbReference type="Pfam" id="PF00168">
    <property type="entry name" value="C2"/>
    <property type="match status" value="1"/>
</dbReference>
<dbReference type="Pfam" id="PF12357">
    <property type="entry name" value="PLD_C"/>
    <property type="match status" value="1"/>
</dbReference>
<dbReference type="Pfam" id="PF00614">
    <property type="entry name" value="PLDc"/>
    <property type="match status" value="2"/>
</dbReference>
<dbReference type="PIRSF" id="PIRSF036470">
    <property type="entry name" value="PLD_plant"/>
    <property type="match status" value="1"/>
</dbReference>
<dbReference type="SMART" id="SM00239">
    <property type="entry name" value="C2"/>
    <property type="match status" value="1"/>
</dbReference>
<dbReference type="SMART" id="SM00155">
    <property type="entry name" value="PLDc"/>
    <property type="match status" value="2"/>
</dbReference>
<dbReference type="SUPFAM" id="SSF49562">
    <property type="entry name" value="C2 domain (Calcium/lipid-binding domain, CaLB)"/>
    <property type="match status" value="1"/>
</dbReference>
<dbReference type="SUPFAM" id="SSF56024">
    <property type="entry name" value="Phospholipase D/nuclease"/>
    <property type="match status" value="2"/>
</dbReference>
<dbReference type="PROSITE" id="PS50004">
    <property type="entry name" value="C2"/>
    <property type="match status" value="1"/>
</dbReference>
<dbReference type="PROSITE" id="PS50035">
    <property type="entry name" value="PLD"/>
    <property type="match status" value="2"/>
</dbReference>
<reference key="1">
    <citation type="journal article" date="1997" name="J. Biol. Chem.">
        <title>Molecular heterogeneity of phospholipase D (PLD). Cloning of PLDgamma and regulation of plant PLDgamma, -beta, and -alpha by polyphosphoinositides and calcium.</title>
        <authorList>
            <person name="Qin W."/>
            <person name="Pappan K."/>
            <person name="Wang X."/>
        </authorList>
    </citation>
    <scope>NUCLEOTIDE SEQUENCE [MRNA]</scope>
    <scope>CATALYTIC ACTIVITY</scope>
    <scope>ACTIVITY REGULATION</scope>
</reference>
<reference key="2">
    <citation type="journal article" date="1999" name="Nature">
        <title>Sequence and analysis of chromosome 4 of the plant Arabidopsis thaliana.</title>
        <authorList>
            <person name="Mayer K.F.X."/>
            <person name="Schueller C."/>
            <person name="Wambutt R."/>
            <person name="Murphy G."/>
            <person name="Volckaert G."/>
            <person name="Pohl T."/>
            <person name="Duesterhoeft A."/>
            <person name="Stiekema W."/>
            <person name="Entian K.-D."/>
            <person name="Terryn N."/>
            <person name="Harris B."/>
            <person name="Ansorge W."/>
            <person name="Brandt P."/>
            <person name="Grivell L.A."/>
            <person name="Rieger M."/>
            <person name="Weichselgartner M."/>
            <person name="de Simone V."/>
            <person name="Obermaier B."/>
            <person name="Mache R."/>
            <person name="Mueller M."/>
            <person name="Kreis M."/>
            <person name="Delseny M."/>
            <person name="Puigdomenech P."/>
            <person name="Watson M."/>
            <person name="Schmidtheini T."/>
            <person name="Reichert B."/>
            <person name="Portetelle D."/>
            <person name="Perez-Alonso M."/>
            <person name="Boutry M."/>
            <person name="Bancroft I."/>
            <person name="Vos P."/>
            <person name="Hoheisel J."/>
            <person name="Zimmermann W."/>
            <person name="Wedler H."/>
            <person name="Ridley P."/>
            <person name="Langham S.-A."/>
            <person name="McCullagh B."/>
            <person name="Bilham L."/>
            <person name="Robben J."/>
            <person name="van der Schueren J."/>
            <person name="Grymonprez B."/>
            <person name="Chuang Y.-J."/>
            <person name="Vandenbussche F."/>
            <person name="Braeken M."/>
            <person name="Weltjens I."/>
            <person name="Voet M."/>
            <person name="Bastiaens I."/>
            <person name="Aert R."/>
            <person name="Defoor E."/>
            <person name="Weitzenegger T."/>
            <person name="Bothe G."/>
            <person name="Ramsperger U."/>
            <person name="Hilbert H."/>
            <person name="Braun M."/>
            <person name="Holzer E."/>
            <person name="Brandt A."/>
            <person name="Peters S."/>
            <person name="van Staveren M."/>
            <person name="Dirkse W."/>
            <person name="Mooijman P."/>
            <person name="Klein Lankhorst R."/>
            <person name="Rose M."/>
            <person name="Hauf J."/>
            <person name="Koetter P."/>
            <person name="Berneiser S."/>
            <person name="Hempel S."/>
            <person name="Feldpausch M."/>
            <person name="Lamberth S."/>
            <person name="Van den Daele H."/>
            <person name="De Keyser A."/>
            <person name="Buysshaert C."/>
            <person name="Gielen J."/>
            <person name="Villarroel R."/>
            <person name="De Clercq R."/>
            <person name="van Montagu M."/>
            <person name="Rogers J."/>
            <person name="Cronin A."/>
            <person name="Quail M.A."/>
            <person name="Bray-Allen S."/>
            <person name="Clark L."/>
            <person name="Doggett J."/>
            <person name="Hall S."/>
            <person name="Kay M."/>
            <person name="Lennard N."/>
            <person name="McLay K."/>
            <person name="Mayes R."/>
            <person name="Pettett A."/>
            <person name="Rajandream M.A."/>
            <person name="Lyne M."/>
            <person name="Benes V."/>
            <person name="Rechmann S."/>
            <person name="Borkova D."/>
            <person name="Bloecker H."/>
            <person name="Scharfe M."/>
            <person name="Grimm M."/>
            <person name="Loehnert T.-H."/>
            <person name="Dose S."/>
            <person name="de Haan M."/>
            <person name="Maarse A.C."/>
            <person name="Schaefer M."/>
            <person name="Mueller-Auer S."/>
            <person name="Gabel C."/>
            <person name="Fuchs M."/>
            <person name="Fartmann B."/>
            <person name="Granderath K."/>
            <person name="Dauner D."/>
            <person name="Herzl A."/>
            <person name="Neumann S."/>
            <person name="Argiriou A."/>
            <person name="Vitale D."/>
            <person name="Liguori R."/>
            <person name="Piravandi E."/>
            <person name="Massenet O."/>
            <person name="Quigley F."/>
            <person name="Clabauld G."/>
            <person name="Muendlein A."/>
            <person name="Felber R."/>
            <person name="Schnabl S."/>
            <person name="Hiller R."/>
            <person name="Schmidt W."/>
            <person name="Lecharny A."/>
            <person name="Aubourg S."/>
            <person name="Chefdor F."/>
            <person name="Cooke R."/>
            <person name="Berger C."/>
            <person name="Monfort A."/>
            <person name="Casacuberta E."/>
            <person name="Gibbons T."/>
            <person name="Weber N."/>
            <person name="Vandenbol M."/>
            <person name="Bargues M."/>
            <person name="Terol J."/>
            <person name="Torres A."/>
            <person name="Perez-Perez A."/>
            <person name="Purnelle B."/>
            <person name="Bent E."/>
            <person name="Johnson S."/>
            <person name="Tacon D."/>
            <person name="Jesse T."/>
            <person name="Heijnen L."/>
            <person name="Schwarz S."/>
            <person name="Scholler P."/>
            <person name="Heber S."/>
            <person name="Francs P."/>
            <person name="Bielke C."/>
            <person name="Frishman D."/>
            <person name="Haase D."/>
            <person name="Lemcke K."/>
            <person name="Mewes H.-W."/>
            <person name="Stocker S."/>
            <person name="Zaccaria P."/>
            <person name="Bevan M."/>
            <person name="Wilson R.K."/>
            <person name="de la Bastide M."/>
            <person name="Habermann K."/>
            <person name="Parnell L."/>
            <person name="Dedhia N."/>
            <person name="Gnoj L."/>
            <person name="Schutz K."/>
            <person name="Huang E."/>
            <person name="Spiegel L."/>
            <person name="Sekhon M."/>
            <person name="Murray J."/>
            <person name="Sheet P."/>
            <person name="Cordes M."/>
            <person name="Abu-Threideh J."/>
            <person name="Stoneking T."/>
            <person name="Kalicki J."/>
            <person name="Graves T."/>
            <person name="Harmon G."/>
            <person name="Edwards J."/>
            <person name="Latreille P."/>
            <person name="Courtney L."/>
            <person name="Cloud J."/>
            <person name="Abbott A."/>
            <person name="Scott K."/>
            <person name="Johnson D."/>
            <person name="Minx P."/>
            <person name="Bentley D."/>
            <person name="Fulton B."/>
            <person name="Miller N."/>
            <person name="Greco T."/>
            <person name="Kemp K."/>
            <person name="Kramer J."/>
            <person name="Fulton L."/>
            <person name="Mardis E."/>
            <person name="Dante M."/>
            <person name="Pepin K."/>
            <person name="Hillier L.W."/>
            <person name="Nelson J."/>
            <person name="Spieth J."/>
            <person name="Ryan E."/>
            <person name="Andrews S."/>
            <person name="Geisel C."/>
            <person name="Layman D."/>
            <person name="Du H."/>
            <person name="Ali J."/>
            <person name="Berghoff A."/>
            <person name="Jones K."/>
            <person name="Drone K."/>
            <person name="Cotton M."/>
            <person name="Joshu C."/>
            <person name="Antonoiu B."/>
            <person name="Zidanic M."/>
            <person name="Strong C."/>
            <person name="Sun H."/>
            <person name="Lamar B."/>
            <person name="Yordan C."/>
            <person name="Ma P."/>
            <person name="Zhong J."/>
            <person name="Preston R."/>
            <person name="Vil D."/>
            <person name="Shekher M."/>
            <person name="Matero A."/>
            <person name="Shah R."/>
            <person name="Swaby I.K."/>
            <person name="O'Shaughnessy A."/>
            <person name="Rodriguez M."/>
            <person name="Hoffman J."/>
            <person name="Till S."/>
            <person name="Granat S."/>
            <person name="Shohdy N."/>
            <person name="Hasegawa A."/>
            <person name="Hameed A."/>
            <person name="Lodhi M."/>
            <person name="Johnson A."/>
            <person name="Chen E."/>
            <person name="Marra M.A."/>
            <person name="Martienssen R."/>
            <person name="McCombie W.R."/>
        </authorList>
    </citation>
    <scope>NUCLEOTIDE SEQUENCE [LARGE SCALE GENOMIC DNA]</scope>
    <source>
        <strain>cv. Columbia</strain>
    </source>
</reference>
<reference key="3">
    <citation type="journal article" date="2017" name="Plant J.">
        <title>Araport11: a complete reannotation of the Arabidopsis thaliana reference genome.</title>
        <authorList>
            <person name="Cheng C.Y."/>
            <person name="Krishnakumar V."/>
            <person name="Chan A.P."/>
            <person name="Thibaud-Nissen F."/>
            <person name="Schobel S."/>
            <person name="Town C.D."/>
        </authorList>
    </citation>
    <scope>GENOME REANNOTATION</scope>
    <source>
        <strain>cv. Columbia</strain>
    </source>
</reference>
<reference key="4">
    <citation type="journal article" date="2003" name="Science">
        <title>Empirical analysis of transcriptional activity in the Arabidopsis genome.</title>
        <authorList>
            <person name="Yamada K."/>
            <person name="Lim J."/>
            <person name="Dale J.M."/>
            <person name="Chen H."/>
            <person name="Shinn P."/>
            <person name="Palm C.J."/>
            <person name="Southwick A.M."/>
            <person name="Wu H.C."/>
            <person name="Kim C.J."/>
            <person name="Nguyen M."/>
            <person name="Pham P.K."/>
            <person name="Cheuk R.F."/>
            <person name="Karlin-Newmann G."/>
            <person name="Liu S.X."/>
            <person name="Lam B."/>
            <person name="Sakano H."/>
            <person name="Wu T."/>
            <person name="Yu G."/>
            <person name="Miranda M."/>
            <person name="Quach H.L."/>
            <person name="Tripp M."/>
            <person name="Chang C.H."/>
            <person name="Lee J.M."/>
            <person name="Toriumi M.J."/>
            <person name="Chan M.M."/>
            <person name="Tang C.C."/>
            <person name="Onodera C.S."/>
            <person name="Deng J.M."/>
            <person name="Akiyama K."/>
            <person name="Ansari Y."/>
            <person name="Arakawa T."/>
            <person name="Banh J."/>
            <person name="Banno F."/>
            <person name="Bowser L."/>
            <person name="Brooks S.Y."/>
            <person name="Carninci P."/>
            <person name="Chao Q."/>
            <person name="Choy N."/>
            <person name="Enju A."/>
            <person name="Goldsmith A.D."/>
            <person name="Gurjal M."/>
            <person name="Hansen N.F."/>
            <person name="Hayashizaki Y."/>
            <person name="Johnson-Hopson C."/>
            <person name="Hsuan V.W."/>
            <person name="Iida K."/>
            <person name="Karnes M."/>
            <person name="Khan S."/>
            <person name="Koesema E."/>
            <person name="Ishida J."/>
            <person name="Jiang P.X."/>
            <person name="Jones T."/>
            <person name="Kawai J."/>
            <person name="Kamiya A."/>
            <person name="Meyers C."/>
            <person name="Nakajima M."/>
            <person name="Narusaka M."/>
            <person name="Seki M."/>
            <person name="Sakurai T."/>
            <person name="Satou M."/>
            <person name="Tamse R."/>
            <person name="Vaysberg M."/>
            <person name="Wallender E.K."/>
            <person name="Wong C."/>
            <person name="Yamamura Y."/>
            <person name="Yuan S."/>
            <person name="Shinozaki K."/>
            <person name="Davis R.W."/>
            <person name="Theologis A."/>
            <person name="Ecker J.R."/>
        </authorList>
    </citation>
    <scope>NUCLEOTIDE SEQUENCE [LARGE SCALE MRNA]</scope>
    <source>
        <strain>cv. Columbia</strain>
    </source>
</reference>
<reference key="5">
    <citation type="journal article" date="1998" name="Arch. Biochem. Biophys.">
        <title>Substrate selectivities and lipid modulation of plant phospholipase D alpha, -beta, and -gamma.</title>
        <authorList>
            <person name="Pappan K."/>
            <person name="Austin-Brown S."/>
            <person name="Chapman K.D."/>
            <person name="Wang X."/>
        </authorList>
    </citation>
    <scope>SUBSTRATE SPECIFICITY</scope>
</reference>
<reference key="6">
    <citation type="journal article" date="1999" name="Arch. Biochem. Biophys.">
        <title>Plant phospholipase Dalpha is an acidic phospholipase active at near-physiological Ca(2+) concentrations.</title>
        <authorList>
            <person name="Pappan K."/>
            <person name="Wang X."/>
        </authorList>
    </citation>
    <scope>FUNCTION</scope>
    <scope>CATALYTIC ACTIVITY</scope>
    <scope>BIOPHYSICOCHEMICAL PROPERTIES</scope>
</reference>
<reference key="7">
    <citation type="journal article" date="1999" name="Plant Physiol.">
        <title>Subcellular distribution and tissue expression of phospholipase Dalpha, Dbeta, and Dgamma in Arabidopsis.</title>
        <authorList>
            <person name="Fan L."/>
            <person name="Zheng S."/>
            <person name="Cui D."/>
            <person name="Wang X."/>
        </authorList>
    </citation>
    <scope>SUBCELLULAR LOCATION</scope>
</reference>
<reference key="8">
    <citation type="journal article" date="2000" name="Plant Cell">
        <title>Involvement of phospholipase D in wound-induced accumulation of jasmonic acid in arabidopsis.</title>
        <authorList>
            <person name="Wang C."/>
            <person name="Zien C.A."/>
            <person name="Afitlhile M."/>
            <person name="Welti R."/>
            <person name="Hildebrand D.F."/>
            <person name="Wang X."/>
        </authorList>
    </citation>
    <scope>INDUCTION BY WOUNDING</scope>
</reference>
<reference key="9">
    <citation type="journal article" date="2002" name="Plant Physiol.">
        <title>The Arabidopsis phospholipase D family. Characterization of a calcium-independent and phosphatidylcholine-selective PLD zeta 1 with distinct regulatory domains.</title>
        <authorList>
            <person name="Qin C."/>
            <person name="Wang X."/>
        </authorList>
    </citation>
    <scope>GENE FAMILY</scope>
    <scope>NOMENCLATURE</scope>
</reference>
<reference key="10">
    <citation type="journal article" date="2006" name="Biochim. Biophys. Acta">
        <title>Expression and characterization of Arabidopsis phospholipase Dgamma2.</title>
        <authorList>
            <person name="Qin C."/>
            <person name="Li M."/>
            <person name="Qin W."/>
            <person name="Bahn S.C."/>
            <person name="Wang C."/>
            <person name="Wang X."/>
        </authorList>
    </citation>
    <scope>INDUCTION BY WOUNDING</scope>
    <scope>TISSUE SPECIFICITY</scope>
    <scope>FUNCTION</scope>
    <scope>CATALYTIC ACTIVITY</scope>
    <scope>COFACTOR</scope>
    <scope>BIOPHYSICOCHEMICAL PROPERTIES</scope>
</reference>
<reference key="11">
    <citation type="journal article" date="2009" name="J. Proteomics">
        <title>Phosphoproteomic analysis of nuclei-enriched fractions from Arabidopsis thaliana.</title>
        <authorList>
            <person name="Jones A.M.E."/>
            <person name="MacLean D."/>
            <person name="Studholme D.J."/>
            <person name="Serna-Sanz A."/>
            <person name="Andreasson E."/>
            <person name="Rathjen J.P."/>
            <person name="Peck S.C."/>
        </authorList>
    </citation>
    <scope>IDENTIFICATION BY MASS SPECTROMETRY [LARGE SCALE ANALYSIS]</scope>
    <source>
        <strain>cv. Columbia</strain>
    </source>
</reference>
<reference key="12">
    <citation type="journal article" date="2009" name="Plant Physiol.">
        <title>Large-scale Arabidopsis phosphoproteome profiling reveals novel chloroplast kinase substrates and phosphorylation networks.</title>
        <authorList>
            <person name="Reiland S."/>
            <person name="Messerli G."/>
            <person name="Baerenfaller K."/>
            <person name="Gerrits B."/>
            <person name="Endler A."/>
            <person name="Grossmann J."/>
            <person name="Gruissem W."/>
            <person name="Baginsky S."/>
        </authorList>
    </citation>
    <scope>PHOSPHORYLATION [LARGE SCALE ANALYSIS] AT SER-680</scope>
    <scope>IDENTIFICATION BY MASS SPECTROMETRY [LARGE SCALE ANALYSIS]</scope>
</reference>
<reference key="13">
    <citation type="journal article" date="2011" name="PLoS ONE">
        <title>Suppression of phospholipase Dgammas confers increased aluminum resistance in Arabidopsis thaliana.</title>
        <authorList>
            <person name="Zhao J."/>
            <person name="Wang C."/>
            <person name="Bedair M."/>
            <person name="Welti R."/>
            <person name="Sumner L.W."/>
            <person name="Baxter I."/>
            <person name="Wang X."/>
        </authorList>
    </citation>
    <scope>FUNCTION</scope>
    <scope>INDUCTION BY ALUMINUM</scope>
    <scope>DISRUPTION PHENOTYPE</scope>
</reference>
<feature type="chain" id="PRO_0000218812" description="Phospholipase D gamma 1">
    <location>
        <begin position="1"/>
        <end position="858"/>
    </location>
</feature>
<feature type="domain" description="C2" evidence="2">
    <location>
        <begin position="27"/>
        <end position="163"/>
    </location>
</feature>
<feature type="domain" description="PLD phosphodiesterase 1" evidence="3">
    <location>
        <begin position="364"/>
        <end position="399"/>
    </location>
</feature>
<feature type="domain" description="PLD phosphodiesterase 2" evidence="3">
    <location>
        <begin position="704"/>
        <end position="731"/>
    </location>
</feature>
<feature type="active site" evidence="3">
    <location>
        <position position="369"/>
    </location>
</feature>
<feature type="active site" evidence="3">
    <location>
        <position position="371"/>
    </location>
</feature>
<feature type="active site" evidence="3">
    <location>
        <position position="376"/>
    </location>
</feature>
<feature type="active site" evidence="3">
    <location>
        <position position="709"/>
    </location>
</feature>
<feature type="active site" evidence="3">
    <location>
        <position position="711"/>
    </location>
</feature>
<feature type="active site" evidence="3">
    <location>
        <position position="716"/>
    </location>
</feature>
<feature type="binding site" evidence="1">
    <location>
        <position position="225"/>
    </location>
    <ligand>
        <name>Ca(2+)</name>
        <dbReference type="ChEBI" id="CHEBI:29108"/>
    </ligand>
</feature>
<feature type="binding site" evidence="1">
    <location>
        <position position="369"/>
    </location>
    <ligand>
        <name>a 1,2-diacyl-sn-glycero-3-phosphate</name>
        <dbReference type="ChEBI" id="CHEBI:58608"/>
    </ligand>
</feature>
<feature type="binding site" evidence="1">
    <location>
        <position position="405"/>
    </location>
    <ligand>
        <name>Ca(2+)</name>
        <dbReference type="ChEBI" id="CHEBI:29108"/>
    </ligand>
</feature>
<feature type="binding site" evidence="1">
    <location>
        <position position="437"/>
    </location>
    <ligand>
        <name>Ca(2+)</name>
        <dbReference type="ChEBI" id="CHEBI:29108"/>
    </ligand>
</feature>
<feature type="binding site" evidence="1">
    <location>
        <position position="565"/>
    </location>
    <ligand>
        <name>a 1,2-diacyl-sn-glycero-3-phosphate</name>
        <dbReference type="ChEBI" id="CHEBI:58608"/>
    </ligand>
</feature>
<feature type="binding site" evidence="1">
    <location>
        <position position="709"/>
    </location>
    <ligand>
        <name>a 1,2-diacyl-sn-glycero-3-phosphate</name>
        <dbReference type="ChEBI" id="CHEBI:58608"/>
    </ligand>
</feature>
<feature type="binding site" evidence="1">
    <location>
        <position position="772"/>
    </location>
    <ligand>
        <name>Ca(2+)</name>
        <dbReference type="ChEBI" id="CHEBI:29108"/>
    </ligand>
</feature>
<feature type="modified residue" description="Phosphoserine" evidence="15">
    <location>
        <position position="680"/>
    </location>
</feature>
<feature type="sequence conflict" description="In Ref. 1; AAB87672." evidence="12" ref="1">
    <original>MQ</original>
    <variation>IE</variation>
    <location>
        <begin position="114"/>
        <end position="115"/>
    </location>
</feature>
<feature type="sequence conflict" description="In Ref. 1; AAB87672." evidence="12" ref="1">
    <original>Q</original>
    <variation>E</variation>
    <location>
        <position position="370"/>
    </location>
</feature>
<feature type="sequence conflict" description="In Ref. 1; AAB87672." evidence="12" ref="1">
    <original>A</original>
    <variation>S</variation>
    <location>
        <position position="377"/>
    </location>
</feature>
<feature type="sequence conflict" description="In Ref. 1; AAB87672." evidence="12" ref="1">
    <original>MQ</original>
    <variation>IE</variation>
    <location>
        <begin position="634"/>
        <end position="635"/>
    </location>
</feature>